<feature type="chain" id="PRO_1000203190" description="Tryptophan synthase beta chain">
    <location>
        <begin position="1"/>
        <end position="404"/>
    </location>
</feature>
<feature type="modified residue" description="N6-(pyridoxal phosphate)lysine" evidence="1">
    <location>
        <position position="91"/>
    </location>
</feature>
<gene>
    <name evidence="1" type="primary">trpB</name>
    <name type="ordered locus">CMM_1763</name>
</gene>
<name>TRPB_CLAM3</name>
<evidence type="ECO:0000255" key="1">
    <source>
        <dbReference type="HAMAP-Rule" id="MF_00133"/>
    </source>
</evidence>
<organism>
    <name type="scientific">Clavibacter michiganensis subsp. michiganensis (strain NCPPB 382)</name>
    <dbReference type="NCBI Taxonomy" id="443906"/>
    <lineage>
        <taxon>Bacteria</taxon>
        <taxon>Bacillati</taxon>
        <taxon>Actinomycetota</taxon>
        <taxon>Actinomycetes</taxon>
        <taxon>Micrococcales</taxon>
        <taxon>Microbacteriaceae</taxon>
        <taxon>Clavibacter</taxon>
    </lineage>
</organism>
<comment type="function">
    <text evidence="1">The beta subunit is responsible for the synthesis of L-tryptophan from indole and L-serine.</text>
</comment>
<comment type="catalytic activity">
    <reaction evidence="1">
        <text>(1S,2R)-1-C-(indol-3-yl)glycerol 3-phosphate + L-serine = D-glyceraldehyde 3-phosphate + L-tryptophan + H2O</text>
        <dbReference type="Rhea" id="RHEA:10532"/>
        <dbReference type="ChEBI" id="CHEBI:15377"/>
        <dbReference type="ChEBI" id="CHEBI:33384"/>
        <dbReference type="ChEBI" id="CHEBI:57912"/>
        <dbReference type="ChEBI" id="CHEBI:58866"/>
        <dbReference type="ChEBI" id="CHEBI:59776"/>
        <dbReference type="EC" id="4.2.1.20"/>
    </reaction>
</comment>
<comment type="cofactor">
    <cofactor evidence="1">
        <name>pyridoxal 5'-phosphate</name>
        <dbReference type="ChEBI" id="CHEBI:597326"/>
    </cofactor>
</comment>
<comment type="pathway">
    <text evidence="1">Amino-acid biosynthesis; L-tryptophan biosynthesis; L-tryptophan from chorismate: step 5/5.</text>
</comment>
<comment type="subunit">
    <text evidence="1">Tetramer of two alpha and two beta chains.</text>
</comment>
<comment type="similarity">
    <text evidence="1">Belongs to the TrpB family.</text>
</comment>
<sequence length="404" mass="43087">MTDLRSATGPYFGDFGGRYVPESLVAALDELAEAWEELKVDPAFIEELKELHRSYTGRPSLITEVPRFAEHAGGARIILKREDLNHTGSHKINNVLGQALLTKKIGKKRIIAETGAGQHGVATATAAALFGLDCVIYMGEVDTERQALNVARMRLLGAEVIPVRSGSRTLKDAINDAMRDWVTNVETTNYVFGTVAGPHPFPAMVRDLQKVIGEEAREQVLALTGRLPDAVAACVGGGSNAIGIFHAFLDDADVALYGFEAGGDGADTPRTAATITKGRPGMLHGARSYLLQDEDGQTIDSHSISAGLDYPGVGPEHSWLSDLGRASYRPVTDDQAMSALRLLSRTEGIIPAIESAHALAGALELGKELGPDSIILINLSGRGDKDMETAGKYFDLIDAGAEQS</sequence>
<keyword id="KW-0028">Amino-acid biosynthesis</keyword>
<keyword id="KW-0057">Aromatic amino acid biosynthesis</keyword>
<keyword id="KW-0456">Lyase</keyword>
<keyword id="KW-0663">Pyridoxal phosphate</keyword>
<keyword id="KW-0822">Tryptophan biosynthesis</keyword>
<reference key="1">
    <citation type="journal article" date="2008" name="J. Bacteriol.">
        <title>The genome sequence of the tomato-pathogenic actinomycete Clavibacter michiganensis subsp. michiganensis NCPPB382 reveals a large island involved in pathogenicity.</title>
        <authorList>
            <person name="Gartemann K.-H."/>
            <person name="Abt B."/>
            <person name="Bekel T."/>
            <person name="Burger A."/>
            <person name="Engemann J."/>
            <person name="Fluegel M."/>
            <person name="Gaigalat L."/>
            <person name="Goesmann A."/>
            <person name="Graefen I."/>
            <person name="Kalinowski J."/>
            <person name="Kaup O."/>
            <person name="Kirchner O."/>
            <person name="Krause L."/>
            <person name="Linke B."/>
            <person name="McHardy A."/>
            <person name="Meyer F."/>
            <person name="Pohle S."/>
            <person name="Rueckert C."/>
            <person name="Schneiker S."/>
            <person name="Zellermann E.-M."/>
            <person name="Puehler A."/>
            <person name="Eichenlaub R."/>
            <person name="Kaiser O."/>
            <person name="Bartels D."/>
        </authorList>
    </citation>
    <scope>NUCLEOTIDE SEQUENCE [LARGE SCALE GENOMIC DNA]</scope>
    <source>
        <strain>NCPPB 382</strain>
    </source>
</reference>
<protein>
    <recommendedName>
        <fullName evidence="1">Tryptophan synthase beta chain</fullName>
        <ecNumber evidence="1">4.2.1.20</ecNumber>
    </recommendedName>
</protein>
<dbReference type="EC" id="4.2.1.20" evidence="1"/>
<dbReference type="EMBL" id="AM711867">
    <property type="protein sequence ID" value="CAN01819.1"/>
    <property type="molecule type" value="Genomic_DNA"/>
</dbReference>
<dbReference type="RefSeq" id="WP_012038451.1">
    <property type="nucleotide sequence ID" value="NC_009480.1"/>
</dbReference>
<dbReference type="SMR" id="A5CRV6"/>
<dbReference type="GeneID" id="92947750"/>
<dbReference type="KEGG" id="cmi:CMM_1763"/>
<dbReference type="eggNOG" id="COG0133">
    <property type="taxonomic scope" value="Bacteria"/>
</dbReference>
<dbReference type="HOGENOM" id="CLU_016734_3_1_11"/>
<dbReference type="OrthoDB" id="9766131at2"/>
<dbReference type="UniPathway" id="UPA00035">
    <property type="reaction ID" value="UER00044"/>
</dbReference>
<dbReference type="Proteomes" id="UP000001564">
    <property type="component" value="Chromosome"/>
</dbReference>
<dbReference type="GO" id="GO:0005737">
    <property type="term" value="C:cytoplasm"/>
    <property type="evidence" value="ECO:0007669"/>
    <property type="project" value="TreeGrafter"/>
</dbReference>
<dbReference type="GO" id="GO:0004834">
    <property type="term" value="F:tryptophan synthase activity"/>
    <property type="evidence" value="ECO:0007669"/>
    <property type="project" value="UniProtKB-UniRule"/>
</dbReference>
<dbReference type="CDD" id="cd06446">
    <property type="entry name" value="Trp-synth_B"/>
    <property type="match status" value="1"/>
</dbReference>
<dbReference type="FunFam" id="3.40.50.1100:FF:000001">
    <property type="entry name" value="Tryptophan synthase beta chain"/>
    <property type="match status" value="1"/>
</dbReference>
<dbReference type="FunFam" id="3.40.50.1100:FF:000004">
    <property type="entry name" value="Tryptophan synthase beta chain"/>
    <property type="match status" value="1"/>
</dbReference>
<dbReference type="Gene3D" id="3.40.50.1100">
    <property type="match status" value="2"/>
</dbReference>
<dbReference type="HAMAP" id="MF_00133">
    <property type="entry name" value="Trp_synth_beta"/>
    <property type="match status" value="1"/>
</dbReference>
<dbReference type="InterPro" id="IPR006653">
    <property type="entry name" value="Trp_synth_b_CS"/>
</dbReference>
<dbReference type="InterPro" id="IPR006654">
    <property type="entry name" value="Trp_synth_beta"/>
</dbReference>
<dbReference type="InterPro" id="IPR023026">
    <property type="entry name" value="Trp_synth_beta/beta-like"/>
</dbReference>
<dbReference type="InterPro" id="IPR001926">
    <property type="entry name" value="TrpB-like_PALP"/>
</dbReference>
<dbReference type="InterPro" id="IPR036052">
    <property type="entry name" value="TrpB-like_PALP_sf"/>
</dbReference>
<dbReference type="NCBIfam" id="TIGR00263">
    <property type="entry name" value="trpB"/>
    <property type="match status" value="1"/>
</dbReference>
<dbReference type="PANTHER" id="PTHR48077:SF3">
    <property type="entry name" value="TRYPTOPHAN SYNTHASE"/>
    <property type="match status" value="1"/>
</dbReference>
<dbReference type="PANTHER" id="PTHR48077">
    <property type="entry name" value="TRYPTOPHAN SYNTHASE-RELATED"/>
    <property type="match status" value="1"/>
</dbReference>
<dbReference type="Pfam" id="PF00291">
    <property type="entry name" value="PALP"/>
    <property type="match status" value="1"/>
</dbReference>
<dbReference type="PIRSF" id="PIRSF001413">
    <property type="entry name" value="Trp_syn_beta"/>
    <property type="match status" value="1"/>
</dbReference>
<dbReference type="SUPFAM" id="SSF53686">
    <property type="entry name" value="Tryptophan synthase beta subunit-like PLP-dependent enzymes"/>
    <property type="match status" value="1"/>
</dbReference>
<dbReference type="PROSITE" id="PS00168">
    <property type="entry name" value="TRP_SYNTHASE_BETA"/>
    <property type="match status" value="1"/>
</dbReference>
<accession>A5CRV6</accession>
<proteinExistence type="inferred from homology"/>